<gene>
    <name evidence="1" type="primary">aspS</name>
    <name type="ordered locus">ECP_1810</name>
</gene>
<proteinExistence type="inferred from homology"/>
<reference key="1">
    <citation type="journal article" date="2006" name="Mol. Microbiol.">
        <title>Role of pathogenicity island-associated integrases in the genome plasticity of uropathogenic Escherichia coli strain 536.</title>
        <authorList>
            <person name="Hochhut B."/>
            <person name="Wilde C."/>
            <person name="Balling G."/>
            <person name="Middendorf B."/>
            <person name="Dobrindt U."/>
            <person name="Brzuszkiewicz E."/>
            <person name="Gottschalk G."/>
            <person name="Carniel E."/>
            <person name="Hacker J."/>
        </authorList>
    </citation>
    <scope>NUCLEOTIDE SEQUENCE [LARGE SCALE GENOMIC DNA]</scope>
    <source>
        <strain>536 / UPEC</strain>
    </source>
</reference>
<keyword id="KW-0030">Aminoacyl-tRNA synthetase</keyword>
<keyword id="KW-0067">ATP-binding</keyword>
<keyword id="KW-0963">Cytoplasm</keyword>
<keyword id="KW-0436">Ligase</keyword>
<keyword id="KW-0547">Nucleotide-binding</keyword>
<keyword id="KW-0648">Protein biosynthesis</keyword>
<comment type="function">
    <text evidence="1">Catalyzes the attachment of L-aspartate to tRNA(Asp) in a two-step reaction: L-aspartate is first activated by ATP to form Asp-AMP and then transferred to the acceptor end of tRNA(Asp).</text>
</comment>
<comment type="catalytic activity">
    <reaction evidence="1">
        <text>tRNA(Asp) + L-aspartate + ATP = L-aspartyl-tRNA(Asp) + AMP + diphosphate</text>
        <dbReference type="Rhea" id="RHEA:19649"/>
        <dbReference type="Rhea" id="RHEA-COMP:9660"/>
        <dbReference type="Rhea" id="RHEA-COMP:9678"/>
        <dbReference type="ChEBI" id="CHEBI:29991"/>
        <dbReference type="ChEBI" id="CHEBI:30616"/>
        <dbReference type="ChEBI" id="CHEBI:33019"/>
        <dbReference type="ChEBI" id="CHEBI:78442"/>
        <dbReference type="ChEBI" id="CHEBI:78516"/>
        <dbReference type="ChEBI" id="CHEBI:456215"/>
        <dbReference type="EC" id="6.1.1.12"/>
    </reaction>
</comment>
<comment type="subunit">
    <text evidence="1">Homodimer.</text>
</comment>
<comment type="subcellular location">
    <subcellularLocation>
        <location evidence="1">Cytoplasm</location>
    </subcellularLocation>
</comment>
<comment type="similarity">
    <text evidence="1">Belongs to the class-II aminoacyl-tRNA synthetase family. Type 1 subfamily.</text>
</comment>
<dbReference type="EC" id="6.1.1.12" evidence="1"/>
<dbReference type="EMBL" id="CP000247">
    <property type="protein sequence ID" value="ABG69813.1"/>
    <property type="molecule type" value="Genomic_DNA"/>
</dbReference>
<dbReference type="RefSeq" id="WP_001258675.1">
    <property type="nucleotide sequence ID" value="NC_008253.1"/>
</dbReference>
<dbReference type="SMR" id="Q0TGW6"/>
<dbReference type="KEGG" id="ecp:ECP_1810"/>
<dbReference type="HOGENOM" id="CLU_014330_3_2_6"/>
<dbReference type="Proteomes" id="UP000009182">
    <property type="component" value="Chromosome"/>
</dbReference>
<dbReference type="GO" id="GO:0005737">
    <property type="term" value="C:cytoplasm"/>
    <property type="evidence" value="ECO:0007669"/>
    <property type="project" value="UniProtKB-SubCell"/>
</dbReference>
<dbReference type="GO" id="GO:0004815">
    <property type="term" value="F:aspartate-tRNA ligase activity"/>
    <property type="evidence" value="ECO:0007669"/>
    <property type="project" value="UniProtKB-UniRule"/>
</dbReference>
<dbReference type="GO" id="GO:0005524">
    <property type="term" value="F:ATP binding"/>
    <property type="evidence" value="ECO:0007669"/>
    <property type="project" value="UniProtKB-UniRule"/>
</dbReference>
<dbReference type="GO" id="GO:0003676">
    <property type="term" value="F:nucleic acid binding"/>
    <property type="evidence" value="ECO:0007669"/>
    <property type="project" value="InterPro"/>
</dbReference>
<dbReference type="GO" id="GO:0006422">
    <property type="term" value="P:aspartyl-tRNA aminoacylation"/>
    <property type="evidence" value="ECO:0007669"/>
    <property type="project" value="UniProtKB-UniRule"/>
</dbReference>
<dbReference type="CDD" id="cd00777">
    <property type="entry name" value="AspRS_core"/>
    <property type="match status" value="1"/>
</dbReference>
<dbReference type="CDD" id="cd04317">
    <property type="entry name" value="EcAspRS_like_N"/>
    <property type="match status" value="1"/>
</dbReference>
<dbReference type="FunFam" id="2.40.50.140:FF:000080">
    <property type="entry name" value="Aspartate--tRNA ligase"/>
    <property type="match status" value="1"/>
</dbReference>
<dbReference type="FunFam" id="3.30.1360.30:FF:000001">
    <property type="entry name" value="Aspartate--tRNA ligase"/>
    <property type="match status" value="1"/>
</dbReference>
<dbReference type="Gene3D" id="3.30.930.10">
    <property type="entry name" value="Bira Bifunctional Protein, Domain 2"/>
    <property type="match status" value="1"/>
</dbReference>
<dbReference type="Gene3D" id="3.30.1360.30">
    <property type="entry name" value="GAD-like domain"/>
    <property type="match status" value="1"/>
</dbReference>
<dbReference type="Gene3D" id="2.40.50.140">
    <property type="entry name" value="Nucleic acid-binding proteins"/>
    <property type="match status" value="1"/>
</dbReference>
<dbReference type="HAMAP" id="MF_00044">
    <property type="entry name" value="Asp_tRNA_synth_type1"/>
    <property type="match status" value="1"/>
</dbReference>
<dbReference type="InterPro" id="IPR004364">
    <property type="entry name" value="Aa-tRNA-synt_II"/>
</dbReference>
<dbReference type="InterPro" id="IPR006195">
    <property type="entry name" value="aa-tRNA-synth_II"/>
</dbReference>
<dbReference type="InterPro" id="IPR045864">
    <property type="entry name" value="aa-tRNA-synth_II/BPL/LPL"/>
</dbReference>
<dbReference type="InterPro" id="IPR004524">
    <property type="entry name" value="Asp-tRNA-ligase_1"/>
</dbReference>
<dbReference type="InterPro" id="IPR047089">
    <property type="entry name" value="Asp-tRNA-ligase_1_N"/>
</dbReference>
<dbReference type="InterPro" id="IPR002312">
    <property type="entry name" value="Asp/Asn-tRNA-synth_IIb"/>
</dbReference>
<dbReference type="InterPro" id="IPR047090">
    <property type="entry name" value="AspRS_core"/>
</dbReference>
<dbReference type="InterPro" id="IPR004115">
    <property type="entry name" value="GAD-like_sf"/>
</dbReference>
<dbReference type="InterPro" id="IPR029351">
    <property type="entry name" value="GAD_dom"/>
</dbReference>
<dbReference type="InterPro" id="IPR012340">
    <property type="entry name" value="NA-bd_OB-fold"/>
</dbReference>
<dbReference type="InterPro" id="IPR004365">
    <property type="entry name" value="NA-bd_OB_tRNA"/>
</dbReference>
<dbReference type="NCBIfam" id="TIGR00459">
    <property type="entry name" value="aspS_bact"/>
    <property type="match status" value="1"/>
</dbReference>
<dbReference type="NCBIfam" id="NF001750">
    <property type="entry name" value="PRK00476.1"/>
    <property type="match status" value="1"/>
</dbReference>
<dbReference type="PANTHER" id="PTHR22594:SF5">
    <property type="entry name" value="ASPARTATE--TRNA LIGASE, MITOCHONDRIAL"/>
    <property type="match status" value="1"/>
</dbReference>
<dbReference type="PANTHER" id="PTHR22594">
    <property type="entry name" value="ASPARTYL/LYSYL-TRNA SYNTHETASE"/>
    <property type="match status" value="1"/>
</dbReference>
<dbReference type="Pfam" id="PF02938">
    <property type="entry name" value="GAD"/>
    <property type="match status" value="1"/>
</dbReference>
<dbReference type="Pfam" id="PF00152">
    <property type="entry name" value="tRNA-synt_2"/>
    <property type="match status" value="1"/>
</dbReference>
<dbReference type="Pfam" id="PF01336">
    <property type="entry name" value="tRNA_anti-codon"/>
    <property type="match status" value="1"/>
</dbReference>
<dbReference type="PRINTS" id="PR01042">
    <property type="entry name" value="TRNASYNTHASP"/>
</dbReference>
<dbReference type="SUPFAM" id="SSF55681">
    <property type="entry name" value="Class II aaRS and biotin synthetases"/>
    <property type="match status" value="1"/>
</dbReference>
<dbReference type="SUPFAM" id="SSF55261">
    <property type="entry name" value="GAD domain-like"/>
    <property type="match status" value="1"/>
</dbReference>
<dbReference type="SUPFAM" id="SSF50249">
    <property type="entry name" value="Nucleic acid-binding proteins"/>
    <property type="match status" value="1"/>
</dbReference>
<dbReference type="PROSITE" id="PS50862">
    <property type="entry name" value="AA_TRNA_LIGASE_II"/>
    <property type="match status" value="1"/>
</dbReference>
<organism>
    <name type="scientific">Escherichia coli O6:K15:H31 (strain 536 / UPEC)</name>
    <dbReference type="NCBI Taxonomy" id="362663"/>
    <lineage>
        <taxon>Bacteria</taxon>
        <taxon>Pseudomonadati</taxon>
        <taxon>Pseudomonadota</taxon>
        <taxon>Gammaproteobacteria</taxon>
        <taxon>Enterobacterales</taxon>
        <taxon>Enterobacteriaceae</taxon>
        <taxon>Escherichia</taxon>
    </lineage>
</organism>
<evidence type="ECO:0000255" key="1">
    <source>
        <dbReference type="HAMAP-Rule" id="MF_00044"/>
    </source>
</evidence>
<feature type="chain" id="PRO_1000006671" description="Aspartate--tRNA ligase">
    <location>
        <begin position="1"/>
        <end position="590"/>
    </location>
</feature>
<feature type="region of interest" description="Aspartate" evidence="1">
    <location>
        <begin position="195"/>
        <end position="198"/>
    </location>
</feature>
<feature type="binding site" evidence="1">
    <location>
        <position position="171"/>
    </location>
    <ligand>
        <name>L-aspartate</name>
        <dbReference type="ChEBI" id="CHEBI:29991"/>
    </ligand>
</feature>
<feature type="binding site" evidence="1">
    <location>
        <begin position="217"/>
        <end position="219"/>
    </location>
    <ligand>
        <name>ATP</name>
        <dbReference type="ChEBI" id="CHEBI:30616"/>
    </ligand>
</feature>
<feature type="binding site" evidence="1">
    <location>
        <position position="217"/>
    </location>
    <ligand>
        <name>L-aspartate</name>
        <dbReference type="ChEBI" id="CHEBI:29991"/>
    </ligand>
</feature>
<feature type="binding site" evidence="1">
    <location>
        <position position="226"/>
    </location>
    <ligand>
        <name>ATP</name>
        <dbReference type="ChEBI" id="CHEBI:30616"/>
    </ligand>
</feature>
<feature type="binding site" evidence="1">
    <location>
        <position position="448"/>
    </location>
    <ligand>
        <name>L-aspartate</name>
        <dbReference type="ChEBI" id="CHEBI:29991"/>
    </ligand>
</feature>
<feature type="binding site" evidence="1">
    <location>
        <position position="482"/>
    </location>
    <ligand>
        <name>ATP</name>
        <dbReference type="ChEBI" id="CHEBI:30616"/>
    </ligand>
</feature>
<feature type="binding site" evidence="1">
    <location>
        <position position="489"/>
    </location>
    <ligand>
        <name>L-aspartate</name>
        <dbReference type="ChEBI" id="CHEBI:29991"/>
    </ligand>
</feature>
<feature type="binding site" evidence="1">
    <location>
        <begin position="534"/>
        <end position="537"/>
    </location>
    <ligand>
        <name>ATP</name>
        <dbReference type="ChEBI" id="CHEBI:30616"/>
    </ligand>
</feature>
<name>SYD_ECOL5</name>
<sequence>MRTEYCGQLRLSHVGQQVTLCGWVNRRRDLGSLIFIDMRDREGIVQVFFDPDRADALKLASELRNEFCIQVTGTVRARDEKNINRDMATGEIEVLASSLTIINRADVLPLDSNHVNTEEARLKYRYLDLRRPEMAQRLKTRAKITSLVRRFMDDHGFLDIETPMLTKATPEGARDYLVPSRVHKGKFYALPQSPQLFKQLLMMSGFDRYYQIVKCFRDEDLRADRQPEFTQIDVETSFMTAPQVREVMEALVRHLWLEVKGVDLGDFPVMTFAEAERRYGSDKPDLRNPMELTDVADLLKSVEFAVFAGPANDPKGRVAALRVPGGASLTRKQIDEYGNFVKIYGAKGLAYIKVNERAKGLEGINSPVAKFLNAEIIEAILERTGAQDGDMIFFGADNKKIVADAMGALRLKVGKDLGLTDESKWAPLWVIDFPMFEDDGEGGLTAMHHPFTSPKDMTAAELKAAPENAVANAYDMVINGYEVGGGSVRIHNGDMQQTVFGILGINEEEQREKFGFLLDALKYGTPPHAGLAFGLDRLTMLLTGTDNIRDVIAFPKTTAAACLMTEAPSFANPTALAELSIQVVKKAENN</sequence>
<protein>
    <recommendedName>
        <fullName evidence="1">Aspartate--tRNA ligase</fullName>
        <ecNumber evidence="1">6.1.1.12</ecNumber>
    </recommendedName>
    <alternativeName>
        <fullName evidence="1">Aspartyl-tRNA synthetase</fullName>
        <shortName evidence="1">AspRS</shortName>
    </alternativeName>
</protein>
<accession>Q0TGW6</accession>